<protein>
    <recommendedName>
        <fullName>Glyceraldehyde-3-phosphate dehydrogenase, cytosolic</fullName>
        <ecNumber>1.2.1.12</ecNumber>
    </recommendedName>
</protein>
<gene>
    <name type="primary">GAPC1</name>
</gene>
<organism>
    <name type="scientific">Pisum sativum</name>
    <name type="common">Garden pea</name>
    <name type="synonym">Lathyrus oleraceus</name>
    <dbReference type="NCBI Taxonomy" id="3888"/>
    <lineage>
        <taxon>Eukaryota</taxon>
        <taxon>Viridiplantae</taxon>
        <taxon>Streptophyta</taxon>
        <taxon>Embryophyta</taxon>
        <taxon>Tracheophyta</taxon>
        <taxon>Spermatophyta</taxon>
        <taxon>Magnoliopsida</taxon>
        <taxon>eudicotyledons</taxon>
        <taxon>Gunneridae</taxon>
        <taxon>Pentapetalae</taxon>
        <taxon>rosids</taxon>
        <taxon>fabids</taxon>
        <taxon>Fabales</taxon>
        <taxon>Fabaceae</taxon>
        <taxon>Papilionoideae</taxon>
        <taxon>50 kb inversion clade</taxon>
        <taxon>NPAAA clade</taxon>
        <taxon>Hologalegina</taxon>
        <taxon>IRL clade</taxon>
        <taxon>Fabeae</taxon>
        <taxon>Pisum</taxon>
    </lineage>
</organism>
<accession>P34922</accession>
<reference key="1">
    <citation type="journal article" date="1993" name="Mol. Biol. Evol.">
        <title>Molecular phylogenies in angiosperm evolution.</title>
        <authorList>
            <person name="Martin W."/>
            <person name="Lydiate D."/>
            <person name="Brinkmann H."/>
            <person name="Forkmann G."/>
            <person name="Saedler H."/>
            <person name="Cerff R."/>
        </authorList>
    </citation>
    <scope>NUCLEOTIDE SEQUENCE</scope>
</reference>
<reference key="2">
    <citation type="journal article" date="1994" name="Nature">
        <title>Five identical intron positions in ancient duplicated genes of eubacterial origin.</title>
        <authorList>
            <person name="Kersanach R."/>
            <person name="Brinkmann H."/>
            <person name="Liaud M.-F."/>
            <person name="Zhang D.-X."/>
            <person name="Martin W."/>
            <person name="Cerff R."/>
        </authorList>
    </citation>
    <scope>NUCLEOTIDE SEQUENCE [GENOMIC DNA]</scope>
    <source>
        <strain>cv. Rosakrone</strain>
    </source>
</reference>
<comment type="function">
    <text evidence="1">Key enzyme in glycolysis that catalyzes the first step of the pathway by converting D-glyceraldehyde 3-phosphate (G3P) into 3-phospho-D-glyceroyl phosphate. Essential for the maintenance of cellular ATP levels and carbohydrate metabolism (By similarity).</text>
</comment>
<comment type="catalytic activity">
    <reaction evidence="2">
        <text>D-glyceraldehyde 3-phosphate + phosphate + NAD(+) = (2R)-3-phospho-glyceroyl phosphate + NADH + H(+)</text>
        <dbReference type="Rhea" id="RHEA:10300"/>
        <dbReference type="ChEBI" id="CHEBI:15378"/>
        <dbReference type="ChEBI" id="CHEBI:43474"/>
        <dbReference type="ChEBI" id="CHEBI:57540"/>
        <dbReference type="ChEBI" id="CHEBI:57604"/>
        <dbReference type="ChEBI" id="CHEBI:57945"/>
        <dbReference type="ChEBI" id="CHEBI:59776"/>
        <dbReference type="EC" id="1.2.1.12"/>
    </reaction>
</comment>
<comment type="pathway">
    <text>Carbohydrate degradation; glycolysis; pyruvate from D-glyceraldehyde 3-phosphate: step 1/5.</text>
</comment>
<comment type="subunit">
    <text evidence="1">Homotetramer.</text>
</comment>
<comment type="subcellular location">
    <subcellularLocation>
        <location evidence="1">Cytoplasm</location>
    </subcellularLocation>
</comment>
<comment type="miscellaneous">
    <text>Plants contain two types of GAPDH: cytosolic forms which participate in glycolysis and chloroplast forms which participate in photosynthesis. All the forms are encoded by distinct genes.</text>
</comment>
<comment type="similarity">
    <text evidence="3">Belongs to the glyceraldehyde-3-phosphate dehydrogenase family.</text>
</comment>
<sequence length="338" mass="36609">MGAKIKIGINGFGRIGRLVARVALKRDDVELVAVNDPFITTDYMTYMFKYDSVHGQWKNDELTVKDSNTLLFGQKPVTVFAHRNPEEIPWASTGADIIVESTGVFTDKDKAAAHLKGGAKKVIISAPSKDAPMFVVGVNENEYKPEFDIISNASCTTNCLAPLAKVINDRFGIVEGLMTTVHSITATQKTVDGPSSKDWRGGRAASFNIIPSSTGAAKAVGKVLPALNGKLTGMSFRVPTVDVSVVDLTVRLEKAATYDEIKAAIKEESEGKLKGILGYTEDDVVSTDFIGDTRSSIFDAKAGIALNDKFVKLVSWYDNELGYSTRVVDLIVHIAKQL</sequence>
<evidence type="ECO:0000250" key="1"/>
<evidence type="ECO:0000255" key="2">
    <source>
        <dbReference type="PROSITE-ProRule" id="PRU10009"/>
    </source>
</evidence>
<evidence type="ECO:0000305" key="3"/>
<proteinExistence type="evidence at transcript level"/>
<name>G3PC_PEA</name>
<feature type="chain" id="PRO_0000145610" description="Glyceraldehyde-3-phosphate dehydrogenase, cytosolic">
    <location>
        <begin position="1"/>
        <end position="338"/>
    </location>
</feature>
<feature type="active site" description="Nucleophile" evidence="2">
    <location>
        <position position="155"/>
    </location>
</feature>
<feature type="binding site" evidence="1">
    <location>
        <begin position="14"/>
        <end position="15"/>
    </location>
    <ligand>
        <name>NAD(+)</name>
        <dbReference type="ChEBI" id="CHEBI:57540"/>
    </ligand>
</feature>
<feature type="binding site" evidence="1">
    <location>
        <position position="36"/>
    </location>
    <ligand>
        <name>NAD(+)</name>
        <dbReference type="ChEBI" id="CHEBI:57540"/>
    </ligand>
</feature>
<feature type="binding site" evidence="1">
    <location>
        <position position="83"/>
    </location>
    <ligand>
        <name>NAD(+)</name>
        <dbReference type="ChEBI" id="CHEBI:57540"/>
    </ligand>
</feature>
<feature type="binding site" evidence="1">
    <location>
        <begin position="154"/>
        <end position="156"/>
    </location>
    <ligand>
        <name>D-glyceraldehyde 3-phosphate</name>
        <dbReference type="ChEBI" id="CHEBI:59776"/>
    </ligand>
</feature>
<feature type="binding site" evidence="1">
    <location>
        <position position="185"/>
    </location>
    <ligand>
        <name>D-glyceraldehyde 3-phosphate</name>
        <dbReference type="ChEBI" id="CHEBI:59776"/>
    </ligand>
</feature>
<feature type="binding site" evidence="1">
    <location>
        <begin position="214"/>
        <end position="215"/>
    </location>
    <ligand>
        <name>D-glyceraldehyde 3-phosphate</name>
        <dbReference type="ChEBI" id="CHEBI:59776"/>
    </ligand>
</feature>
<feature type="binding site" evidence="1">
    <location>
        <position position="237"/>
    </location>
    <ligand>
        <name>D-glyceraldehyde 3-phosphate</name>
        <dbReference type="ChEBI" id="CHEBI:59776"/>
    </ligand>
</feature>
<feature type="binding site" evidence="1">
    <location>
        <position position="319"/>
    </location>
    <ligand>
        <name>NAD(+)</name>
        <dbReference type="ChEBI" id="CHEBI:57540"/>
    </ligand>
</feature>
<feature type="site" description="Activates thiol group during catalysis" evidence="1">
    <location>
        <position position="182"/>
    </location>
</feature>
<keyword id="KW-0963">Cytoplasm</keyword>
<keyword id="KW-0324">Glycolysis</keyword>
<keyword id="KW-0520">NAD</keyword>
<keyword id="KW-0560">Oxidoreductase</keyword>
<dbReference type="EC" id="1.2.1.12"/>
<dbReference type="EMBL" id="L07500">
    <property type="protein sequence ID" value="AAA33667.1"/>
    <property type="molecule type" value="mRNA"/>
</dbReference>
<dbReference type="EMBL" id="X73150">
    <property type="protein sequence ID" value="CAA51675.1"/>
    <property type="molecule type" value="Genomic_DNA"/>
</dbReference>
<dbReference type="PIR" id="T06781">
    <property type="entry name" value="T06781"/>
</dbReference>
<dbReference type="SMR" id="P34922"/>
<dbReference type="SABIO-RK" id="P34922"/>
<dbReference type="UniPathway" id="UPA00109">
    <property type="reaction ID" value="UER00184"/>
</dbReference>
<dbReference type="GO" id="GO:0005829">
    <property type="term" value="C:cytosol"/>
    <property type="evidence" value="ECO:0007669"/>
    <property type="project" value="TreeGrafter"/>
</dbReference>
<dbReference type="GO" id="GO:0004365">
    <property type="term" value="F:glyceraldehyde-3-phosphate dehydrogenase (NAD+) (phosphorylating) activity"/>
    <property type="evidence" value="ECO:0007669"/>
    <property type="project" value="UniProtKB-EC"/>
</dbReference>
<dbReference type="GO" id="GO:0051287">
    <property type="term" value="F:NAD binding"/>
    <property type="evidence" value="ECO:0007669"/>
    <property type="project" value="InterPro"/>
</dbReference>
<dbReference type="GO" id="GO:0050661">
    <property type="term" value="F:NADP binding"/>
    <property type="evidence" value="ECO:0007669"/>
    <property type="project" value="InterPro"/>
</dbReference>
<dbReference type="GO" id="GO:0006006">
    <property type="term" value="P:glucose metabolic process"/>
    <property type="evidence" value="ECO:0007669"/>
    <property type="project" value="InterPro"/>
</dbReference>
<dbReference type="GO" id="GO:0006096">
    <property type="term" value="P:glycolytic process"/>
    <property type="evidence" value="ECO:0007669"/>
    <property type="project" value="UniProtKB-UniPathway"/>
</dbReference>
<dbReference type="CDD" id="cd18126">
    <property type="entry name" value="GAPDH_I_C"/>
    <property type="match status" value="1"/>
</dbReference>
<dbReference type="CDD" id="cd05214">
    <property type="entry name" value="GAPDH_I_N"/>
    <property type="match status" value="1"/>
</dbReference>
<dbReference type="FunFam" id="3.30.360.10:FF:000001">
    <property type="entry name" value="Glyceraldehyde-3-phosphate dehydrogenase"/>
    <property type="match status" value="1"/>
</dbReference>
<dbReference type="FunFam" id="3.40.50.720:FF:000020">
    <property type="entry name" value="Glyceraldehyde-3-phosphate dehydrogenase"/>
    <property type="match status" value="1"/>
</dbReference>
<dbReference type="Gene3D" id="3.30.360.10">
    <property type="entry name" value="Dihydrodipicolinate Reductase, domain 2"/>
    <property type="match status" value="1"/>
</dbReference>
<dbReference type="Gene3D" id="3.40.50.720">
    <property type="entry name" value="NAD(P)-binding Rossmann-like Domain"/>
    <property type="match status" value="1"/>
</dbReference>
<dbReference type="InterPro" id="IPR020831">
    <property type="entry name" value="GlycerAld/Erythrose_P_DH"/>
</dbReference>
<dbReference type="InterPro" id="IPR020830">
    <property type="entry name" value="GlycerAld_3-P_DH_AS"/>
</dbReference>
<dbReference type="InterPro" id="IPR020829">
    <property type="entry name" value="GlycerAld_3-P_DH_cat"/>
</dbReference>
<dbReference type="InterPro" id="IPR020828">
    <property type="entry name" value="GlycerAld_3-P_DH_NAD(P)-bd"/>
</dbReference>
<dbReference type="InterPro" id="IPR006424">
    <property type="entry name" value="Glyceraldehyde-3-P_DH_1"/>
</dbReference>
<dbReference type="InterPro" id="IPR036291">
    <property type="entry name" value="NAD(P)-bd_dom_sf"/>
</dbReference>
<dbReference type="NCBIfam" id="TIGR01534">
    <property type="entry name" value="GAPDH-I"/>
    <property type="match status" value="1"/>
</dbReference>
<dbReference type="PANTHER" id="PTHR10836">
    <property type="entry name" value="GLYCERALDEHYDE 3-PHOSPHATE DEHYDROGENASE"/>
    <property type="match status" value="1"/>
</dbReference>
<dbReference type="PANTHER" id="PTHR10836:SF132">
    <property type="entry name" value="GLYCERALDEHYDE-3-PHOSPHATE DEHYDROGENASE"/>
    <property type="match status" value="1"/>
</dbReference>
<dbReference type="Pfam" id="PF02800">
    <property type="entry name" value="Gp_dh_C"/>
    <property type="match status" value="1"/>
</dbReference>
<dbReference type="Pfam" id="PF00044">
    <property type="entry name" value="Gp_dh_N"/>
    <property type="match status" value="1"/>
</dbReference>
<dbReference type="PIRSF" id="PIRSF000149">
    <property type="entry name" value="GAP_DH"/>
    <property type="match status" value="1"/>
</dbReference>
<dbReference type="PRINTS" id="PR00078">
    <property type="entry name" value="G3PDHDRGNASE"/>
</dbReference>
<dbReference type="SMART" id="SM00846">
    <property type="entry name" value="Gp_dh_N"/>
    <property type="match status" value="1"/>
</dbReference>
<dbReference type="SUPFAM" id="SSF55347">
    <property type="entry name" value="Glyceraldehyde-3-phosphate dehydrogenase-like, C-terminal domain"/>
    <property type="match status" value="1"/>
</dbReference>
<dbReference type="SUPFAM" id="SSF51735">
    <property type="entry name" value="NAD(P)-binding Rossmann-fold domains"/>
    <property type="match status" value="1"/>
</dbReference>
<dbReference type="PROSITE" id="PS00071">
    <property type="entry name" value="GAPDH"/>
    <property type="match status" value="1"/>
</dbReference>